<name>NFUA_ECOSE</name>
<proteinExistence type="inferred from homology"/>
<comment type="function">
    <text evidence="1">Involved in iron-sulfur cluster biogenesis. Binds a 4Fe-4S cluster, can transfer this cluster to apoproteins, and thereby intervenes in the maturation of Fe/S proteins. Could also act as a scaffold/chaperone for damaged Fe/S proteins.</text>
</comment>
<comment type="cofactor">
    <cofactor evidence="1">
        <name>[4Fe-4S] cluster</name>
        <dbReference type="ChEBI" id="CHEBI:49883"/>
    </cofactor>
    <text evidence="1">Binds 1 [4Fe-4S] cluster per subunit. The cluster is presumably bound at the interface of two monomers.</text>
</comment>
<comment type="subunit">
    <text evidence="1">Homodimer.</text>
</comment>
<comment type="similarity">
    <text evidence="1">Belongs to the NfuA family.</text>
</comment>
<dbReference type="EMBL" id="AP009240">
    <property type="protein sequence ID" value="BAG79205.1"/>
    <property type="molecule type" value="Genomic_DNA"/>
</dbReference>
<dbReference type="RefSeq" id="WP_000619389.1">
    <property type="nucleotide sequence ID" value="NC_011415.1"/>
</dbReference>
<dbReference type="SMR" id="B6I2X8"/>
<dbReference type="GeneID" id="93778582"/>
<dbReference type="KEGG" id="ecy:ECSE_3681"/>
<dbReference type="HOGENOM" id="CLU_094569_0_0_6"/>
<dbReference type="Proteomes" id="UP000008199">
    <property type="component" value="Chromosome"/>
</dbReference>
<dbReference type="GO" id="GO:0051539">
    <property type="term" value="F:4 iron, 4 sulfur cluster binding"/>
    <property type="evidence" value="ECO:0007669"/>
    <property type="project" value="UniProtKB-UniRule"/>
</dbReference>
<dbReference type="GO" id="GO:0005506">
    <property type="term" value="F:iron ion binding"/>
    <property type="evidence" value="ECO:0007669"/>
    <property type="project" value="InterPro"/>
</dbReference>
<dbReference type="GO" id="GO:0016226">
    <property type="term" value="P:iron-sulfur cluster assembly"/>
    <property type="evidence" value="ECO:0007669"/>
    <property type="project" value="UniProtKB-UniRule"/>
</dbReference>
<dbReference type="GO" id="GO:0051604">
    <property type="term" value="P:protein maturation"/>
    <property type="evidence" value="ECO:0007669"/>
    <property type="project" value="UniProtKB-UniRule"/>
</dbReference>
<dbReference type="FunFam" id="2.60.300.12:FF:000004">
    <property type="entry name" value="Fe/S biogenesis protein NfuA"/>
    <property type="match status" value="1"/>
</dbReference>
<dbReference type="FunFam" id="3.30.300.130:FF:000002">
    <property type="entry name" value="Fe/S biogenesis protein NfuA"/>
    <property type="match status" value="1"/>
</dbReference>
<dbReference type="Gene3D" id="3.30.300.130">
    <property type="entry name" value="Fe-S cluster assembly (FSCA)"/>
    <property type="match status" value="1"/>
</dbReference>
<dbReference type="Gene3D" id="2.60.300.12">
    <property type="entry name" value="HesB-like domain"/>
    <property type="match status" value="1"/>
</dbReference>
<dbReference type="HAMAP" id="MF_01637">
    <property type="entry name" value="Fe_S_biogen_NfuA"/>
    <property type="match status" value="1"/>
</dbReference>
<dbReference type="InterPro" id="IPR017726">
    <property type="entry name" value="Fe/S_biogenesis_protein_NfuA"/>
</dbReference>
<dbReference type="InterPro" id="IPR000361">
    <property type="entry name" value="FeS_biogenesis"/>
</dbReference>
<dbReference type="InterPro" id="IPR034904">
    <property type="entry name" value="FSCA_dom_sf"/>
</dbReference>
<dbReference type="InterPro" id="IPR035903">
    <property type="entry name" value="HesB-like_dom_sf"/>
</dbReference>
<dbReference type="InterPro" id="IPR001075">
    <property type="entry name" value="NIF_FeS_clus_asmbl_NifU_C"/>
</dbReference>
<dbReference type="NCBIfam" id="NF008392">
    <property type="entry name" value="PRK11190.1"/>
    <property type="match status" value="1"/>
</dbReference>
<dbReference type="NCBIfam" id="TIGR03341">
    <property type="entry name" value="YhgI_GntY"/>
    <property type="match status" value="1"/>
</dbReference>
<dbReference type="PANTHER" id="PTHR11178:SF51">
    <property type="entry name" value="FE_S BIOGENESIS PROTEIN NFUA"/>
    <property type="match status" value="1"/>
</dbReference>
<dbReference type="PANTHER" id="PTHR11178">
    <property type="entry name" value="IRON-SULFUR CLUSTER SCAFFOLD PROTEIN NFU-RELATED"/>
    <property type="match status" value="1"/>
</dbReference>
<dbReference type="Pfam" id="PF01521">
    <property type="entry name" value="Fe-S_biosyn"/>
    <property type="match status" value="1"/>
</dbReference>
<dbReference type="Pfam" id="PF01106">
    <property type="entry name" value="NifU"/>
    <property type="match status" value="1"/>
</dbReference>
<dbReference type="SUPFAM" id="SSF117916">
    <property type="entry name" value="Fe-S cluster assembly (FSCA) domain-like"/>
    <property type="match status" value="1"/>
</dbReference>
<dbReference type="SUPFAM" id="SSF89360">
    <property type="entry name" value="HesB-like domain"/>
    <property type="match status" value="1"/>
</dbReference>
<organism>
    <name type="scientific">Escherichia coli (strain SE11)</name>
    <dbReference type="NCBI Taxonomy" id="409438"/>
    <lineage>
        <taxon>Bacteria</taxon>
        <taxon>Pseudomonadati</taxon>
        <taxon>Pseudomonadota</taxon>
        <taxon>Gammaproteobacteria</taxon>
        <taxon>Enterobacterales</taxon>
        <taxon>Enterobacteriaceae</taxon>
        <taxon>Escherichia</taxon>
    </lineage>
</organism>
<keyword id="KW-0004">4Fe-4S</keyword>
<keyword id="KW-0408">Iron</keyword>
<keyword id="KW-0411">Iron-sulfur</keyword>
<keyword id="KW-0479">Metal-binding</keyword>
<gene>
    <name evidence="1" type="primary">nfuA</name>
    <name type="ordered locus">ECSE_3681</name>
</gene>
<evidence type="ECO:0000255" key="1">
    <source>
        <dbReference type="HAMAP-Rule" id="MF_01637"/>
    </source>
</evidence>
<protein>
    <recommendedName>
        <fullName evidence="1">Fe/S biogenesis protein NfuA</fullName>
    </recommendedName>
</protein>
<accession>B6I2X8</accession>
<sequence length="191" mass="20998">MIRISDAAQAHFAKLLANQEEGTQIRVFVINPGTPNAECGVSYCPPDAVEATDTALKFDLLTAYVDELSAPYLEDAEIDFVTDQLGSQLTLKAPNAKMRKVADDAPLMERVEYMLQSQINPQLAGHGGRVSLMEITEDGYAILQFGGGCNGCSMVDVTLKEGIEKQLLNEFPELKGVRDLTEHQRGEHSYY</sequence>
<reference key="1">
    <citation type="journal article" date="2008" name="DNA Res.">
        <title>Complete genome sequence and comparative analysis of the wild-type commensal Escherichia coli strain SE11 isolated from a healthy adult.</title>
        <authorList>
            <person name="Oshima K."/>
            <person name="Toh H."/>
            <person name="Ogura Y."/>
            <person name="Sasamoto H."/>
            <person name="Morita H."/>
            <person name="Park S.-H."/>
            <person name="Ooka T."/>
            <person name="Iyoda S."/>
            <person name="Taylor T.D."/>
            <person name="Hayashi T."/>
            <person name="Itoh K."/>
            <person name="Hattori M."/>
        </authorList>
    </citation>
    <scope>NUCLEOTIDE SEQUENCE [LARGE SCALE GENOMIC DNA]</scope>
    <source>
        <strain>SE11</strain>
    </source>
</reference>
<feature type="chain" id="PRO_1000186751" description="Fe/S biogenesis protein NfuA">
    <location>
        <begin position="1"/>
        <end position="191"/>
    </location>
</feature>
<feature type="binding site" evidence="1">
    <location>
        <position position="149"/>
    </location>
    <ligand>
        <name>[4Fe-4S] cluster</name>
        <dbReference type="ChEBI" id="CHEBI:49883"/>
    </ligand>
</feature>
<feature type="binding site" evidence="1">
    <location>
        <position position="152"/>
    </location>
    <ligand>
        <name>[4Fe-4S] cluster</name>
        <dbReference type="ChEBI" id="CHEBI:49883"/>
    </ligand>
</feature>